<sequence length="492" mass="54130">MANYFNTLNLRQQLAQLGKCRFMAREEFVDETGYLKGKKVVIVGCGAQGLNQGLNMRDSGLDIAYALRKEAIEEKRASWRKATENGFQVGTYEELIPQADLVINLTPDKQHSSVVSAVQPLMKEGAALGYSHGLNIVEVGEQIRKDITVVMVAPKCPGTEVREEYKRGFGVPTLIAVHPENDPKGEGMAIAKAWAAATGAHRAGVLESSFVAEVKSDLMGEQTILCGMLQAGSLLCYDKLVADGAEPGYAGKLIQFGWETITEALKQGGITLMMDRLSNPAKLRAYALSEQLKEMMTPLFQKHMDDIISGEFSSGMMADWANDDKKLLGWREETGNTSFENSPEYDGKISEQEYFDHGVLMVAMVKAGVELAFEIMVDTGIIAESAYYESLHELPLIANTISRKRLYEMNVVISDTAEYGNYLFSHVAVPLLKEKFMGSLQAGDLGKPVVDNGIDNAQLRDVNEAIRHHPIEVVGRVLRGYMTDMKRIAVGG</sequence>
<gene>
    <name evidence="1" type="primary">ilvC</name>
    <name type="ordered locus">plu4668</name>
</gene>
<reference key="1">
    <citation type="journal article" date="2003" name="Nat. Biotechnol.">
        <title>The genome sequence of the entomopathogenic bacterium Photorhabdus luminescens.</title>
        <authorList>
            <person name="Duchaud E."/>
            <person name="Rusniok C."/>
            <person name="Frangeul L."/>
            <person name="Buchrieser C."/>
            <person name="Givaudan A."/>
            <person name="Taourit S."/>
            <person name="Bocs S."/>
            <person name="Boursaux-Eude C."/>
            <person name="Chandler M."/>
            <person name="Charles J.-F."/>
            <person name="Dassa E."/>
            <person name="Derose R."/>
            <person name="Derzelle S."/>
            <person name="Freyssinet G."/>
            <person name="Gaudriault S."/>
            <person name="Medigue C."/>
            <person name="Lanois A."/>
            <person name="Powell K."/>
            <person name="Siguier P."/>
            <person name="Vincent R."/>
            <person name="Wingate V."/>
            <person name="Zouine M."/>
            <person name="Glaser P."/>
            <person name="Boemare N."/>
            <person name="Danchin A."/>
            <person name="Kunst F."/>
        </authorList>
    </citation>
    <scope>NUCLEOTIDE SEQUENCE [LARGE SCALE GENOMIC DNA]</scope>
    <source>
        <strain>DSM 15139 / CIP 105565 / TT01</strain>
    </source>
</reference>
<protein>
    <recommendedName>
        <fullName evidence="1">Ketol-acid reductoisomerase (NADP(+))</fullName>
        <shortName evidence="1">KARI</shortName>
        <ecNumber evidence="1">1.1.1.86</ecNumber>
    </recommendedName>
    <alternativeName>
        <fullName evidence="1">Acetohydroxy-acid isomeroreductase</fullName>
        <shortName evidence="1">AHIR</shortName>
    </alternativeName>
    <alternativeName>
        <fullName evidence="1">Alpha-keto-beta-hydroxylacyl reductoisomerase</fullName>
    </alternativeName>
    <alternativeName>
        <fullName evidence="1">Ketol-acid reductoisomerase type 2</fullName>
    </alternativeName>
    <alternativeName>
        <fullName evidence="1">Ketol-acid reductoisomerase type II</fullName>
    </alternativeName>
</protein>
<feature type="chain" id="PRO_0000151336" description="Ketol-acid reductoisomerase (NADP(+))">
    <location>
        <begin position="1"/>
        <end position="492"/>
    </location>
</feature>
<feature type="domain" description="KARI N-terminal Rossmann" evidence="2">
    <location>
        <begin position="15"/>
        <end position="208"/>
    </location>
</feature>
<feature type="domain" description="KARI C-terminal knotted 1" evidence="3">
    <location>
        <begin position="209"/>
        <end position="344"/>
    </location>
</feature>
<feature type="domain" description="KARI C-terminal knotted 2" evidence="3">
    <location>
        <begin position="345"/>
        <end position="485"/>
    </location>
</feature>
<feature type="active site" evidence="1">
    <location>
        <position position="132"/>
    </location>
</feature>
<feature type="binding site" evidence="1">
    <location>
        <begin position="45"/>
        <end position="48"/>
    </location>
    <ligand>
        <name>NADP(+)</name>
        <dbReference type="ChEBI" id="CHEBI:58349"/>
    </ligand>
</feature>
<feature type="binding site" evidence="1">
    <location>
        <position position="68"/>
    </location>
    <ligand>
        <name>NADP(+)</name>
        <dbReference type="ChEBI" id="CHEBI:58349"/>
    </ligand>
</feature>
<feature type="binding site" evidence="1">
    <location>
        <position position="76"/>
    </location>
    <ligand>
        <name>NADP(+)</name>
        <dbReference type="ChEBI" id="CHEBI:58349"/>
    </ligand>
</feature>
<feature type="binding site" evidence="1">
    <location>
        <position position="78"/>
    </location>
    <ligand>
        <name>NADP(+)</name>
        <dbReference type="ChEBI" id="CHEBI:58349"/>
    </ligand>
</feature>
<feature type="binding site" evidence="1">
    <location>
        <begin position="108"/>
        <end position="110"/>
    </location>
    <ligand>
        <name>NADP(+)</name>
        <dbReference type="ChEBI" id="CHEBI:58349"/>
    </ligand>
</feature>
<feature type="binding site" evidence="1">
    <location>
        <position position="158"/>
    </location>
    <ligand>
        <name>NADP(+)</name>
        <dbReference type="ChEBI" id="CHEBI:58349"/>
    </ligand>
</feature>
<feature type="binding site" evidence="1">
    <location>
        <position position="217"/>
    </location>
    <ligand>
        <name>Mg(2+)</name>
        <dbReference type="ChEBI" id="CHEBI:18420"/>
        <label>1</label>
    </ligand>
</feature>
<feature type="binding site" evidence="1">
    <location>
        <position position="217"/>
    </location>
    <ligand>
        <name>Mg(2+)</name>
        <dbReference type="ChEBI" id="CHEBI:18420"/>
        <label>2</label>
    </ligand>
</feature>
<feature type="binding site" evidence="1">
    <location>
        <position position="221"/>
    </location>
    <ligand>
        <name>Mg(2+)</name>
        <dbReference type="ChEBI" id="CHEBI:18420"/>
        <label>1</label>
    </ligand>
</feature>
<feature type="binding site" evidence="1">
    <location>
        <position position="389"/>
    </location>
    <ligand>
        <name>Mg(2+)</name>
        <dbReference type="ChEBI" id="CHEBI:18420"/>
        <label>2</label>
    </ligand>
</feature>
<feature type="binding site" evidence="1">
    <location>
        <position position="393"/>
    </location>
    <ligand>
        <name>Mg(2+)</name>
        <dbReference type="ChEBI" id="CHEBI:18420"/>
        <label>2</label>
    </ligand>
</feature>
<feature type="binding site" evidence="1">
    <location>
        <position position="414"/>
    </location>
    <ligand>
        <name>substrate</name>
    </ligand>
</feature>
<name>ILVC_PHOLL</name>
<proteinExistence type="inferred from homology"/>
<keyword id="KW-0028">Amino-acid biosynthesis</keyword>
<keyword id="KW-0100">Branched-chain amino acid biosynthesis</keyword>
<keyword id="KW-0460">Magnesium</keyword>
<keyword id="KW-0479">Metal-binding</keyword>
<keyword id="KW-0521">NADP</keyword>
<keyword id="KW-0560">Oxidoreductase</keyword>
<keyword id="KW-1185">Reference proteome</keyword>
<keyword id="KW-0677">Repeat</keyword>
<organism>
    <name type="scientific">Photorhabdus laumondii subsp. laumondii (strain DSM 15139 / CIP 105565 / TT01)</name>
    <name type="common">Photorhabdus luminescens subsp. laumondii</name>
    <dbReference type="NCBI Taxonomy" id="243265"/>
    <lineage>
        <taxon>Bacteria</taxon>
        <taxon>Pseudomonadati</taxon>
        <taxon>Pseudomonadota</taxon>
        <taxon>Gammaproteobacteria</taxon>
        <taxon>Enterobacterales</taxon>
        <taxon>Morganellaceae</taxon>
        <taxon>Photorhabdus</taxon>
    </lineage>
</organism>
<comment type="function">
    <text evidence="1">Involved in the biosynthesis of branched-chain amino acids (BCAA). Catalyzes an alkyl-migration followed by a ketol-acid reduction of (S)-2-acetolactate (S2AL) to yield (R)-2,3-dihydroxy-isovalerate. In the isomerase reaction, S2AL is rearranged via a Mg-dependent methyl migration to produce 3-hydroxy-3-methyl-2-ketobutyrate (HMKB). In the reductase reaction, this 2-ketoacid undergoes a metal-dependent reduction by NADPH to yield (R)-2,3-dihydroxy-isovalerate.</text>
</comment>
<comment type="catalytic activity">
    <reaction evidence="1">
        <text>(2R)-2,3-dihydroxy-3-methylbutanoate + NADP(+) = (2S)-2-acetolactate + NADPH + H(+)</text>
        <dbReference type="Rhea" id="RHEA:22068"/>
        <dbReference type="ChEBI" id="CHEBI:15378"/>
        <dbReference type="ChEBI" id="CHEBI:49072"/>
        <dbReference type="ChEBI" id="CHEBI:57783"/>
        <dbReference type="ChEBI" id="CHEBI:58349"/>
        <dbReference type="ChEBI" id="CHEBI:58476"/>
        <dbReference type="EC" id="1.1.1.86"/>
    </reaction>
</comment>
<comment type="catalytic activity">
    <reaction evidence="1">
        <text>(2R,3R)-2,3-dihydroxy-3-methylpentanoate + NADP(+) = (S)-2-ethyl-2-hydroxy-3-oxobutanoate + NADPH + H(+)</text>
        <dbReference type="Rhea" id="RHEA:13493"/>
        <dbReference type="ChEBI" id="CHEBI:15378"/>
        <dbReference type="ChEBI" id="CHEBI:49256"/>
        <dbReference type="ChEBI" id="CHEBI:49258"/>
        <dbReference type="ChEBI" id="CHEBI:57783"/>
        <dbReference type="ChEBI" id="CHEBI:58349"/>
        <dbReference type="EC" id="1.1.1.86"/>
    </reaction>
</comment>
<comment type="cofactor">
    <cofactor evidence="1">
        <name>Mg(2+)</name>
        <dbReference type="ChEBI" id="CHEBI:18420"/>
    </cofactor>
    <text evidence="1">Binds 2 magnesium ions per subunit.</text>
</comment>
<comment type="pathway">
    <text evidence="1">Amino-acid biosynthesis; L-isoleucine biosynthesis; L-isoleucine from 2-oxobutanoate: step 2/4.</text>
</comment>
<comment type="pathway">
    <text evidence="1">Amino-acid biosynthesis; L-valine biosynthesis; L-valine from pyruvate: step 2/4.</text>
</comment>
<comment type="similarity">
    <text evidence="1">Belongs to the ketol-acid reductoisomerase family.</text>
</comment>
<dbReference type="EC" id="1.1.1.86" evidence="1"/>
<dbReference type="EMBL" id="BX571874">
    <property type="protein sequence ID" value="CAE17040.1"/>
    <property type="molecule type" value="Genomic_DNA"/>
</dbReference>
<dbReference type="RefSeq" id="WP_011148738.1">
    <property type="nucleotide sequence ID" value="NC_005126.1"/>
</dbReference>
<dbReference type="SMR" id="Q7MYK9"/>
<dbReference type="STRING" id="243265.plu4668"/>
<dbReference type="GeneID" id="48850885"/>
<dbReference type="KEGG" id="plu:plu4668"/>
<dbReference type="eggNOG" id="COG0059">
    <property type="taxonomic scope" value="Bacteria"/>
</dbReference>
<dbReference type="HOGENOM" id="CLU_551905_0_0_6"/>
<dbReference type="OrthoDB" id="9804088at2"/>
<dbReference type="UniPathway" id="UPA00047">
    <property type="reaction ID" value="UER00056"/>
</dbReference>
<dbReference type="UniPathway" id="UPA00049">
    <property type="reaction ID" value="UER00060"/>
</dbReference>
<dbReference type="Proteomes" id="UP000002514">
    <property type="component" value="Chromosome"/>
</dbReference>
<dbReference type="GO" id="GO:0005829">
    <property type="term" value="C:cytosol"/>
    <property type="evidence" value="ECO:0007669"/>
    <property type="project" value="TreeGrafter"/>
</dbReference>
<dbReference type="GO" id="GO:0004455">
    <property type="term" value="F:ketol-acid reductoisomerase activity"/>
    <property type="evidence" value="ECO:0007669"/>
    <property type="project" value="UniProtKB-UniRule"/>
</dbReference>
<dbReference type="GO" id="GO:0000287">
    <property type="term" value="F:magnesium ion binding"/>
    <property type="evidence" value="ECO:0007669"/>
    <property type="project" value="UniProtKB-UniRule"/>
</dbReference>
<dbReference type="GO" id="GO:0009097">
    <property type="term" value="P:isoleucine biosynthetic process"/>
    <property type="evidence" value="ECO:0007669"/>
    <property type="project" value="UniProtKB-UniRule"/>
</dbReference>
<dbReference type="GO" id="GO:0009099">
    <property type="term" value="P:L-valine biosynthetic process"/>
    <property type="evidence" value="ECO:0007669"/>
    <property type="project" value="UniProtKB-UniRule"/>
</dbReference>
<dbReference type="FunFam" id="1.10.1040.10:FF:000007">
    <property type="entry name" value="Ketol-acid reductoisomerase (NADP(+))"/>
    <property type="match status" value="1"/>
</dbReference>
<dbReference type="FunFam" id="3.40.50.720:FF:000043">
    <property type="entry name" value="Ketol-acid reductoisomerase (NADP(+))"/>
    <property type="match status" value="1"/>
</dbReference>
<dbReference type="Gene3D" id="1.10.1040.10">
    <property type="entry name" value="N-(1-d-carboxylethyl)-l-norvaline Dehydrogenase, domain 2"/>
    <property type="match status" value="1"/>
</dbReference>
<dbReference type="Gene3D" id="3.40.50.720">
    <property type="entry name" value="NAD(P)-binding Rossmann-like Domain"/>
    <property type="match status" value="1"/>
</dbReference>
<dbReference type="HAMAP" id="MF_00435">
    <property type="entry name" value="IlvC"/>
    <property type="match status" value="1"/>
</dbReference>
<dbReference type="InterPro" id="IPR008927">
    <property type="entry name" value="6-PGluconate_DH-like_C_sf"/>
</dbReference>
<dbReference type="InterPro" id="IPR013328">
    <property type="entry name" value="6PGD_dom2"/>
</dbReference>
<dbReference type="InterPro" id="IPR013023">
    <property type="entry name" value="KARI"/>
</dbReference>
<dbReference type="InterPro" id="IPR000506">
    <property type="entry name" value="KARI_C"/>
</dbReference>
<dbReference type="InterPro" id="IPR013116">
    <property type="entry name" value="KARI_N"/>
</dbReference>
<dbReference type="InterPro" id="IPR036291">
    <property type="entry name" value="NAD(P)-bd_dom_sf"/>
</dbReference>
<dbReference type="NCBIfam" id="TIGR00465">
    <property type="entry name" value="ilvC"/>
    <property type="match status" value="1"/>
</dbReference>
<dbReference type="NCBIfam" id="NF003557">
    <property type="entry name" value="PRK05225.1"/>
    <property type="match status" value="1"/>
</dbReference>
<dbReference type="PANTHER" id="PTHR21371">
    <property type="entry name" value="KETOL-ACID REDUCTOISOMERASE, MITOCHONDRIAL"/>
    <property type="match status" value="1"/>
</dbReference>
<dbReference type="PANTHER" id="PTHR21371:SF1">
    <property type="entry name" value="KETOL-ACID REDUCTOISOMERASE, MITOCHONDRIAL"/>
    <property type="match status" value="1"/>
</dbReference>
<dbReference type="Pfam" id="PF01450">
    <property type="entry name" value="KARI_C"/>
    <property type="match status" value="2"/>
</dbReference>
<dbReference type="Pfam" id="PF07991">
    <property type="entry name" value="KARI_N"/>
    <property type="match status" value="1"/>
</dbReference>
<dbReference type="SUPFAM" id="SSF48179">
    <property type="entry name" value="6-phosphogluconate dehydrogenase C-terminal domain-like"/>
    <property type="match status" value="2"/>
</dbReference>
<dbReference type="SUPFAM" id="SSF51735">
    <property type="entry name" value="NAD(P)-binding Rossmann-fold domains"/>
    <property type="match status" value="1"/>
</dbReference>
<dbReference type="PROSITE" id="PS51851">
    <property type="entry name" value="KARI_C"/>
    <property type="match status" value="2"/>
</dbReference>
<dbReference type="PROSITE" id="PS51850">
    <property type="entry name" value="KARI_N"/>
    <property type="match status" value="1"/>
</dbReference>
<accession>Q7MYK9</accession>
<evidence type="ECO:0000255" key="1">
    <source>
        <dbReference type="HAMAP-Rule" id="MF_00435"/>
    </source>
</evidence>
<evidence type="ECO:0000255" key="2">
    <source>
        <dbReference type="PROSITE-ProRule" id="PRU01197"/>
    </source>
</evidence>
<evidence type="ECO:0000255" key="3">
    <source>
        <dbReference type="PROSITE-ProRule" id="PRU01198"/>
    </source>
</evidence>